<comment type="function">
    <text evidence="1">Required for maturation of urease via the functional incorporation of the urease nickel metallocenter.</text>
</comment>
<comment type="subunit">
    <text evidence="1">UreD, UreF and UreG form a complex that acts as a GTP-hydrolysis-dependent molecular chaperone, activating the urease apoprotein by helping to assemble the nickel containing metallocenter of UreC. The UreE protein probably delivers the nickel.</text>
</comment>
<comment type="subcellular location">
    <subcellularLocation>
        <location evidence="1">Cytoplasm</location>
    </subcellularLocation>
</comment>
<comment type="similarity">
    <text evidence="1">Belongs to the UreF family.</text>
</comment>
<comment type="sequence caution" evidence="2">
    <conflict type="erroneous initiation">
        <sequence resource="EMBL-CDS" id="ABS69380"/>
    </conflict>
</comment>
<name>UREF_XANP2</name>
<protein>
    <recommendedName>
        <fullName evidence="1">Urease accessory protein UreF</fullName>
    </recommendedName>
</protein>
<accession>A7IMY7</accession>
<proteinExistence type="inferred from homology"/>
<dbReference type="EMBL" id="CP000781">
    <property type="protein sequence ID" value="ABS69380.1"/>
    <property type="status" value="ALT_INIT"/>
    <property type="molecule type" value="Genomic_DNA"/>
</dbReference>
<dbReference type="SMR" id="A7IMY7"/>
<dbReference type="STRING" id="78245.Xaut_4159"/>
<dbReference type="KEGG" id="xau:Xaut_4159"/>
<dbReference type="eggNOG" id="COG0830">
    <property type="taxonomic scope" value="Bacteria"/>
</dbReference>
<dbReference type="HOGENOM" id="CLU_049215_2_0_5"/>
<dbReference type="Proteomes" id="UP000002417">
    <property type="component" value="Chromosome"/>
</dbReference>
<dbReference type="GO" id="GO:0005737">
    <property type="term" value="C:cytoplasm"/>
    <property type="evidence" value="ECO:0007669"/>
    <property type="project" value="UniProtKB-SubCell"/>
</dbReference>
<dbReference type="GO" id="GO:0016151">
    <property type="term" value="F:nickel cation binding"/>
    <property type="evidence" value="ECO:0007669"/>
    <property type="project" value="UniProtKB-UniRule"/>
</dbReference>
<dbReference type="Gene3D" id="1.10.4190.10">
    <property type="entry name" value="Urease accessory protein UreF"/>
    <property type="match status" value="1"/>
</dbReference>
<dbReference type="HAMAP" id="MF_01385">
    <property type="entry name" value="UreF"/>
    <property type="match status" value="1"/>
</dbReference>
<dbReference type="InterPro" id="IPR002639">
    <property type="entry name" value="UreF"/>
</dbReference>
<dbReference type="InterPro" id="IPR038277">
    <property type="entry name" value="UreF_sf"/>
</dbReference>
<dbReference type="PANTHER" id="PTHR33620">
    <property type="entry name" value="UREASE ACCESSORY PROTEIN F"/>
    <property type="match status" value="1"/>
</dbReference>
<dbReference type="PANTHER" id="PTHR33620:SF1">
    <property type="entry name" value="UREASE ACCESSORY PROTEIN F"/>
    <property type="match status" value="1"/>
</dbReference>
<dbReference type="Pfam" id="PF01730">
    <property type="entry name" value="UreF"/>
    <property type="match status" value="1"/>
</dbReference>
<dbReference type="PIRSF" id="PIRSF009467">
    <property type="entry name" value="Ureas_acces_UreF"/>
    <property type="match status" value="1"/>
</dbReference>
<gene>
    <name evidence="1" type="primary">ureF</name>
    <name type="ordered locus">Xaut_4159</name>
</gene>
<organism>
    <name type="scientific">Xanthobacter autotrophicus (strain ATCC BAA-1158 / Py2)</name>
    <dbReference type="NCBI Taxonomy" id="78245"/>
    <lineage>
        <taxon>Bacteria</taxon>
        <taxon>Pseudomonadati</taxon>
        <taxon>Pseudomonadota</taxon>
        <taxon>Alphaproteobacteria</taxon>
        <taxon>Hyphomicrobiales</taxon>
        <taxon>Xanthobacteraceae</taxon>
        <taxon>Xanthobacter</taxon>
    </lineage>
</organism>
<evidence type="ECO:0000255" key="1">
    <source>
        <dbReference type="HAMAP-Rule" id="MF_01385"/>
    </source>
</evidence>
<evidence type="ECO:0000305" key="2"/>
<keyword id="KW-0143">Chaperone</keyword>
<keyword id="KW-0963">Cytoplasm</keyword>
<keyword id="KW-0996">Nickel insertion</keyword>
<keyword id="KW-1185">Reference proteome</keyword>
<feature type="chain" id="PRO_0000344202" description="Urease accessory protein UreF">
    <location>
        <begin position="1"/>
        <end position="243"/>
    </location>
</feature>
<reference key="1">
    <citation type="submission" date="2007-07" db="EMBL/GenBank/DDBJ databases">
        <title>Complete sequence of chromosome of Xanthobacter autotrophicus Py2.</title>
        <authorList>
            <consortium name="US DOE Joint Genome Institute"/>
            <person name="Copeland A."/>
            <person name="Lucas S."/>
            <person name="Lapidus A."/>
            <person name="Barry K."/>
            <person name="Glavina del Rio T."/>
            <person name="Hammon N."/>
            <person name="Israni S."/>
            <person name="Dalin E."/>
            <person name="Tice H."/>
            <person name="Pitluck S."/>
            <person name="Sims D."/>
            <person name="Brettin T."/>
            <person name="Bruce D."/>
            <person name="Detter J.C."/>
            <person name="Han C."/>
            <person name="Tapia R."/>
            <person name="Brainard J."/>
            <person name="Schmutz J."/>
            <person name="Larimer F."/>
            <person name="Land M."/>
            <person name="Hauser L."/>
            <person name="Kyrpides N."/>
            <person name="Kim E."/>
            <person name="Ensigns S.A."/>
            <person name="Richardson P."/>
        </authorList>
    </citation>
    <scope>NUCLEOTIDE SEQUENCE [LARGE SCALE GENOMIC DNA]</scope>
    <source>
        <strain>ATCC BAA-1158 / Py2</strain>
    </source>
</reference>
<sequence>MQGRAGAGEAAGAGSEADAPVSLLPLFAWLTPSFPVGAYAYSHTLEWAVEAGDIRDEESLGTFLGDLLALGFGRSDAILAAHAHRAAAVGDKTALAEVNALAVALAPSAELRLETCQQGRSFLDAVRAAWPAPGLDAAAAALVGEVAYPVAVGLAAGVHGLPLAPTLEAFLLATVQNLVSAAVRLAPIGQTAGTRVVARLAPGVRALALEIPTLTLDDLGSATFRADLGSFRHETQYTRLFRS</sequence>